<reference key="1">
    <citation type="journal article" date="2003" name="Mol. Microbiol.">
        <title>Genome-based analysis of virulence genes in a non-biofilm-forming Staphylococcus epidermidis strain (ATCC 12228).</title>
        <authorList>
            <person name="Zhang Y.-Q."/>
            <person name="Ren S.-X."/>
            <person name="Li H.-L."/>
            <person name="Wang Y.-X."/>
            <person name="Fu G."/>
            <person name="Yang J."/>
            <person name="Qin Z.-Q."/>
            <person name="Miao Y.-G."/>
            <person name="Wang W.-Y."/>
            <person name="Chen R.-S."/>
            <person name="Shen Y."/>
            <person name="Chen Z."/>
            <person name="Yuan Z.-H."/>
            <person name="Zhao G.-P."/>
            <person name="Qu D."/>
            <person name="Danchin A."/>
            <person name="Wen Y.-M."/>
        </authorList>
    </citation>
    <scope>NUCLEOTIDE SEQUENCE [LARGE SCALE GENOMIC DNA]</scope>
    <source>
        <strain>ATCC 12228 / FDA PCI 1200</strain>
    </source>
</reference>
<proteinExistence type="inferred from homology"/>
<feature type="chain" id="PRO_0000110657" description="UPF0358 protein SE_0811">
    <location>
        <begin position="1"/>
        <end position="91"/>
    </location>
</feature>
<dbReference type="EMBL" id="AE015929">
    <property type="protein sequence ID" value="AAO04408.1"/>
    <property type="molecule type" value="Genomic_DNA"/>
</dbReference>
<dbReference type="RefSeq" id="NP_764366.1">
    <property type="nucleotide sequence ID" value="NC_004461.1"/>
</dbReference>
<dbReference type="RefSeq" id="WP_001830079.1">
    <property type="nucleotide sequence ID" value="NZ_WBME01000046.1"/>
</dbReference>
<dbReference type="SMR" id="Q8CT04"/>
<dbReference type="KEGG" id="sep:SE_0811"/>
<dbReference type="PATRIC" id="fig|176280.10.peg.786"/>
<dbReference type="eggNOG" id="COG4838">
    <property type="taxonomic scope" value="Bacteria"/>
</dbReference>
<dbReference type="HOGENOM" id="CLU_160493_1_0_9"/>
<dbReference type="OrthoDB" id="2135235at2"/>
<dbReference type="Proteomes" id="UP000001411">
    <property type="component" value="Chromosome"/>
</dbReference>
<dbReference type="Gene3D" id="1.10.287.750">
    <property type="entry name" value="SO2669-like"/>
    <property type="match status" value="1"/>
</dbReference>
<dbReference type="HAMAP" id="MF_01560">
    <property type="entry name" value="UPF0358"/>
    <property type="match status" value="1"/>
</dbReference>
<dbReference type="InterPro" id="IPR009983">
    <property type="entry name" value="UPF0358"/>
</dbReference>
<dbReference type="InterPro" id="IPR036270">
    <property type="entry name" value="UPF0358_sf"/>
</dbReference>
<dbReference type="NCBIfam" id="NF010187">
    <property type="entry name" value="PRK13666.1"/>
    <property type="match status" value="1"/>
</dbReference>
<dbReference type="Pfam" id="PF07408">
    <property type="entry name" value="DUF1507"/>
    <property type="match status" value="1"/>
</dbReference>
<dbReference type="SUPFAM" id="SSF140404">
    <property type="entry name" value="EF2458-like"/>
    <property type="match status" value="1"/>
</dbReference>
<evidence type="ECO:0000255" key="1">
    <source>
        <dbReference type="HAMAP-Rule" id="MF_01560"/>
    </source>
</evidence>
<sequence>MSNQSKLNSAAYDQLNKDADRILHLIKVQMDNLTLPSCPLYEEVLDTQMFGLQKEVDFAVQLGLVDKEDGKQLMLRLEKELSKLHEAFTNV</sequence>
<comment type="similarity">
    <text evidence="1">Belongs to the UPF0358 family.</text>
</comment>
<protein>
    <recommendedName>
        <fullName evidence="1">UPF0358 protein SE_0811</fullName>
    </recommendedName>
</protein>
<organism>
    <name type="scientific">Staphylococcus epidermidis (strain ATCC 12228 / FDA PCI 1200)</name>
    <dbReference type="NCBI Taxonomy" id="176280"/>
    <lineage>
        <taxon>Bacteria</taxon>
        <taxon>Bacillati</taxon>
        <taxon>Bacillota</taxon>
        <taxon>Bacilli</taxon>
        <taxon>Bacillales</taxon>
        <taxon>Staphylococcaceae</taxon>
        <taxon>Staphylococcus</taxon>
    </lineage>
</organism>
<gene>
    <name type="ordered locus">SE_0811</name>
</gene>
<accession>Q8CT04</accession>
<name>Y811_STAES</name>